<dbReference type="EMBL" id="CP000050">
    <property type="protein sequence ID" value="AAY50091.1"/>
    <property type="molecule type" value="Genomic_DNA"/>
</dbReference>
<dbReference type="RefSeq" id="WP_011036396.1">
    <property type="nucleotide sequence ID" value="NZ_CP155948.1"/>
</dbReference>
<dbReference type="SMR" id="Q4US82"/>
<dbReference type="GeneID" id="79388647"/>
<dbReference type="KEGG" id="xcb:XC_3043"/>
<dbReference type="HOGENOM" id="CLU_100590_5_1_6"/>
<dbReference type="Proteomes" id="UP000000420">
    <property type="component" value="Chromosome"/>
</dbReference>
<dbReference type="GO" id="GO:0005737">
    <property type="term" value="C:cytoplasm"/>
    <property type="evidence" value="ECO:0007669"/>
    <property type="project" value="UniProtKB-ARBA"/>
</dbReference>
<dbReference type="GO" id="GO:0015935">
    <property type="term" value="C:small ribosomal subunit"/>
    <property type="evidence" value="ECO:0007669"/>
    <property type="project" value="TreeGrafter"/>
</dbReference>
<dbReference type="GO" id="GO:0003735">
    <property type="term" value="F:structural constituent of ribosome"/>
    <property type="evidence" value="ECO:0007669"/>
    <property type="project" value="InterPro"/>
</dbReference>
<dbReference type="GO" id="GO:0006412">
    <property type="term" value="P:translation"/>
    <property type="evidence" value="ECO:0007669"/>
    <property type="project" value="UniProtKB-UniRule"/>
</dbReference>
<dbReference type="FunFam" id="3.30.1320.10:FF:000008">
    <property type="entry name" value="30S ribosomal protein S16"/>
    <property type="match status" value="1"/>
</dbReference>
<dbReference type="Gene3D" id="3.30.1320.10">
    <property type="match status" value="1"/>
</dbReference>
<dbReference type="HAMAP" id="MF_00385">
    <property type="entry name" value="Ribosomal_bS16"/>
    <property type="match status" value="1"/>
</dbReference>
<dbReference type="InterPro" id="IPR000307">
    <property type="entry name" value="Ribosomal_bS16"/>
</dbReference>
<dbReference type="InterPro" id="IPR020592">
    <property type="entry name" value="Ribosomal_bS16_CS"/>
</dbReference>
<dbReference type="InterPro" id="IPR023803">
    <property type="entry name" value="Ribosomal_bS16_dom_sf"/>
</dbReference>
<dbReference type="NCBIfam" id="TIGR00002">
    <property type="entry name" value="S16"/>
    <property type="match status" value="1"/>
</dbReference>
<dbReference type="PANTHER" id="PTHR12919">
    <property type="entry name" value="30S RIBOSOMAL PROTEIN S16"/>
    <property type="match status" value="1"/>
</dbReference>
<dbReference type="PANTHER" id="PTHR12919:SF20">
    <property type="entry name" value="SMALL RIBOSOMAL SUBUNIT PROTEIN BS16M"/>
    <property type="match status" value="1"/>
</dbReference>
<dbReference type="Pfam" id="PF00886">
    <property type="entry name" value="Ribosomal_S16"/>
    <property type="match status" value="1"/>
</dbReference>
<dbReference type="SUPFAM" id="SSF54565">
    <property type="entry name" value="Ribosomal protein S16"/>
    <property type="match status" value="1"/>
</dbReference>
<dbReference type="PROSITE" id="PS00732">
    <property type="entry name" value="RIBOSOMAL_S16"/>
    <property type="match status" value="1"/>
</dbReference>
<reference key="1">
    <citation type="journal article" date="2005" name="Genome Res.">
        <title>Comparative and functional genomic analyses of the pathogenicity of phytopathogen Xanthomonas campestris pv. campestris.</title>
        <authorList>
            <person name="Qian W."/>
            <person name="Jia Y."/>
            <person name="Ren S.-X."/>
            <person name="He Y.-Q."/>
            <person name="Feng J.-X."/>
            <person name="Lu L.-F."/>
            <person name="Sun Q."/>
            <person name="Ying G."/>
            <person name="Tang D.-J."/>
            <person name="Tang H."/>
            <person name="Wu W."/>
            <person name="Hao P."/>
            <person name="Wang L."/>
            <person name="Jiang B.-L."/>
            <person name="Zeng S."/>
            <person name="Gu W.-Y."/>
            <person name="Lu G."/>
            <person name="Rong L."/>
            <person name="Tian Y."/>
            <person name="Yao Z."/>
            <person name="Fu G."/>
            <person name="Chen B."/>
            <person name="Fang R."/>
            <person name="Qiang B."/>
            <person name="Chen Z."/>
            <person name="Zhao G.-P."/>
            <person name="Tang J.-L."/>
            <person name="He C."/>
        </authorList>
    </citation>
    <scope>NUCLEOTIDE SEQUENCE [LARGE SCALE GENOMIC DNA]</scope>
    <source>
        <strain>8004</strain>
    </source>
</reference>
<evidence type="ECO:0000255" key="1">
    <source>
        <dbReference type="HAMAP-Rule" id="MF_00385"/>
    </source>
</evidence>
<evidence type="ECO:0000305" key="2"/>
<keyword id="KW-0687">Ribonucleoprotein</keyword>
<keyword id="KW-0689">Ribosomal protein</keyword>
<comment type="similarity">
    <text evidence="1">Belongs to the bacterial ribosomal protein bS16 family.</text>
</comment>
<name>RS16_XANC8</name>
<proteinExistence type="inferred from homology"/>
<sequence>MVKIRLTRGGAKKRPFYHIIVTDVRSARDGRNIERLGYYNPVAQGAEPRVVLDVARVDHWVGQGAQLTDKVRNLYREASKSQAAAA</sequence>
<organism>
    <name type="scientific">Xanthomonas campestris pv. campestris (strain 8004)</name>
    <dbReference type="NCBI Taxonomy" id="314565"/>
    <lineage>
        <taxon>Bacteria</taxon>
        <taxon>Pseudomonadati</taxon>
        <taxon>Pseudomonadota</taxon>
        <taxon>Gammaproteobacteria</taxon>
        <taxon>Lysobacterales</taxon>
        <taxon>Lysobacteraceae</taxon>
        <taxon>Xanthomonas</taxon>
    </lineage>
</organism>
<feature type="chain" id="PRO_0000243893" description="Small ribosomal subunit protein bS16">
    <location>
        <begin position="1"/>
        <end position="86"/>
    </location>
</feature>
<gene>
    <name evidence="1" type="primary">rpsP</name>
    <name type="ordered locus">XC_3043</name>
</gene>
<accession>Q4US82</accession>
<protein>
    <recommendedName>
        <fullName evidence="1">Small ribosomal subunit protein bS16</fullName>
    </recommendedName>
    <alternativeName>
        <fullName evidence="2">30S ribosomal protein S16</fullName>
    </alternativeName>
</protein>